<name>Y1110_METTH</name>
<feature type="chain" id="PRO_0000107238" description="Uncharacterized protein MTH_1110">
    <location>
        <begin position="1"/>
        <end position="151"/>
    </location>
</feature>
<evidence type="ECO:0000305" key="1"/>
<sequence>MIHLQHTPPAVTALMIPAVLSCWSLHPHQIYYLHSTYLCMVILMKVHLRVFIEVENLGRVMNILADEGVTGFYIVEYKGVSPTEWKGFSVKEDPESAISLIHDYARDAVLICSVVDEELVEPIVNRFGEELASEKYTIIEIPIRRIIVNSP</sequence>
<gene>
    <name type="ordered locus">MTH_1110</name>
</gene>
<protein>
    <recommendedName>
        <fullName>Uncharacterized protein MTH_1110</fullName>
    </recommendedName>
</protein>
<keyword id="KW-1185">Reference proteome</keyword>
<comment type="similarity">
    <text evidence="1">To M.jannaschii MJ1244 and MJ1245.</text>
</comment>
<accession>O27182</accession>
<organism>
    <name type="scientific">Methanothermobacter thermautotrophicus (strain ATCC 29096 / DSM 1053 / JCM 10044 / NBRC 100330 / Delta H)</name>
    <name type="common">Methanobacterium thermoautotrophicum</name>
    <dbReference type="NCBI Taxonomy" id="187420"/>
    <lineage>
        <taxon>Archaea</taxon>
        <taxon>Methanobacteriati</taxon>
        <taxon>Methanobacteriota</taxon>
        <taxon>Methanomada group</taxon>
        <taxon>Methanobacteria</taxon>
        <taxon>Methanobacteriales</taxon>
        <taxon>Methanobacteriaceae</taxon>
        <taxon>Methanothermobacter</taxon>
    </lineage>
</organism>
<reference key="1">
    <citation type="journal article" date="1997" name="J. Bacteriol.">
        <title>Complete genome sequence of Methanobacterium thermoautotrophicum deltaH: functional analysis and comparative genomics.</title>
        <authorList>
            <person name="Smith D.R."/>
            <person name="Doucette-Stamm L.A."/>
            <person name="Deloughery C."/>
            <person name="Lee H.-M."/>
            <person name="Dubois J."/>
            <person name="Aldredge T."/>
            <person name="Bashirzadeh R."/>
            <person name="Blakely D."/>
            <person name="Cook R."/>
            <person name="Gilbert K."/>
            <person name="Harrison D."/>
            <person name="Hoang L."/>
            <person name="Keagle P."/>
            <person name="Lumm W."/>
            <person name="Pothier B."/>
            <person name="Qiu D."/>
            <person name="Spadafora R."/>
            <person name="Vicare R."/>
            <person name="Wang Y."/>
            <person name="Wierzbowski J."/>
            <person name="Gibson R."/>
            <person name="Jiwani N."/>
            <person name="Caruso A."/>
            <person name="Bush D."/>
            <person name="Safer H."/>
            <person name="Patwell D."/>
            <person name="Prabhakar S."/>
            <person name="McDougall S."/>
            <person name="Shimer G."/>
            <person name="Goyal A."/>
            <person name="Pietrovski S."/>
            <person name="Church G.M."/>
            <person name="Daniels C.J."/>
            <person name="Mao J.-I."/>
            <person name="Rice P."/>
            <person name="Noelling J."/>
            <person name="Reeve J.N."/>
        </authorList>
    </citation>
    <scope>NUCLEOTIDE SEQUENCE [LARGE SCALE GENOMIC DNA]</scope>
    <source>
        <strain>ATCC 29096 / DSM 1053 / JCM 10044 / NBRC 100330 / Delta H</strain>
    </source>
</reference>
<dbReference type="EMBL" id="AE000666">
    <property type="protein sequence ID" value="AAB85599.1"/>
    <property type="molecule type" value="Genomic_DNA"/>
</dbReference>
<dbReference type="PIR" id="G69014">
    <property type="entry name" value="G69014"/>
</dbReference>
<dbReference type="SMR" id="O27182"/>
<dbReference type="FunCoup" id="O27182">
    <property type="interactions" value="1"/>
</dbReference>
<dbReference type="STRING" id="187420.MTH_1110"/>
<dbReference type="PaxDb" id="187420-MTH_1110"/>
<dbReference type="EnsemblBacteria" id="AAB85599">
    <property type="protein sequence ID" value="AAB85599"/>
    <property type="gene ID" value="MTH_1110"/>
</dbReference>
<dbReference type="KEGG" id="mth:MTH_1110"/>
<dbReference type="PATRIC" id="fig|187420.15.peg.1086"/>
<dbReference type="HOGENOM" id="CLU_145179_0_0_2"/>
<dbReference type="InParanoid" id="O27182"/>
<dbReference type="Proteomes" id="UP000005223">
    <property type="component" value="Chromosome"/>
</dbReference>
<dbReference type="InterPro" id="IPR011322">
    <property type="entry name" value="N-reg_PII-like_a/b"/>
</dbReference>
<dbReference type="InterPro" id="IPR019296">
    <property type="entry name" value="Unchr_N-regulatory-PII-rel"/>
</dbReference>
<dbReference type="Pfam" id="PF10126">
    <property type="entry name" value="Nit_Regul_Hom"/>
    <property type="match status" value="1"/>
</dbReference>
<dbReference type="SUPFAM" id="SSF54913">
    <property type="entry name" value="GlnB-like"/>
    <property type="match status" value="1"/>
</dbReference>
<proteinExistence type="predicted"/>